<comment type="function">
    <text evidence="4">Involved in sperm capacitation and acrosome reaction.</text>
</comment>
<comment type="subunit">
    <text evidence="4">Interacts with calmodulin.</text>
</comment>
<comment type="subcellular location">
    <subcellularLocation>
        <location evidence="4">Cytoplasmic vesicle</location>
        <location evidence="4">Secretory vesicle</location>
        <location evidence="4">Acrosome</location>
    </subcellularLocation>
</comment>
<comment type="alternative products">
    <event type="alternative splicing"/>
    <isoform>
        <id>Q9D9K8-1</id>
        <name>1</name>
        <sequence type="displayed"/>
    </isoform>
    <isoform>
        <id>Q9D9K8-2</id>
        <name>2</name>
        <sequence type="described" ref="VSP_024186"/>
    </isoform>
</comment>
<comment type="tissue specificity">
    <text evidence="4">Specifically expressed in testes and mature spermatozoa (at protein level).</text>
</comment>
<comment type="disruption phenotype">
    <text evidence="4">Homozygote Iqcf1 mice are significantly less fertile because of reduced sperm motility and acrosome reaction.</text>
</comment>
<evidence type="ECO:0000250" key="1">
    <source>
        <dbReference type="UniProtKB" id="Q8N6M8"/>
    </source>
</evidence>
<evidence type="ECO:0000255" key="2">
    <source>
        <dbReference type="PROSITE-ProRule" id="PRU00116"/>
    </source>
</evidence>
<evidence type="ECO:0000256" key="3">
    <source>
        <dbReference type="SAM" id="MobiDB-lite"/>
    </source>
</evidence>
<evidence type="ECO:0000269" key="4">
    <source>
    </source>
</evidence>
<evidence type="ECO:0000303" key="5">
    <source>
    </source>
</evidence>
<evidence type="ECO:0000312" key="6">
    <source>
        <dbReference type="MGI" id="MGI:1921517"/>
    </source>
</evidence>
<organism>
    <name type="scientific">Mus musculus</name>
    <name type="common">Mouse</name>
    <dbReference type="NCBI Taxonomy" id="10090"/>
    <lineage>
        <taxon>Eukaryota</taxon>
        <taxon>Metazoa</taxon>
        <taxon>Chordata</taxon>
        <taxon>Craniata</taxon>
        <taxon>Vertebrata</taxon>
        <taxon>Euteleostomi</taxon>
        <taxon>Mammalia</taxon>
        <taxon>Eutheria</taxon>
        <taxon>Euarchontoglires</taxon>
        <taxon>Glires</taxon>
        <taxon>Rodentia</taxon>
        <taxon>Myomorpha</taxon>
        <taxon>Muroidea</taxon>
        <taxon>Muridae</taxon>
        <taxon>Murinae</taxon>
        <taxon>Mus</taxon>
        <taxon>Mus</taxon>
    </lineage>
</organism>
<protein>
    <recommendedName>
        <fullName evidence="1">IQ domain-containing protein F1</fullName>
    </recommendedName>
</protein>
<accession>Q9D9K8</accession>
<accession>Q810M2</accession>
<sequence>MGEEQQKPEELNAPTDDAPQEKQQPADLSSETEKAKSKKKQELSEKDQVVKIQAWWRGTLVRRSLLHAALSAWIIQCWWRLILPKIMEKRRQSMLDTFQQEQWAVVRLQSWIRMWRIRRRYCRLLKAVRTIQSHWRGHTCSSRGVIKGQYRISTSQMHLELEVLLGSGPCIVTECIPLPIKQ</sequence>
<reference key="1">
    <citation type="journal article" date="2005" name="Science">
        <title>The transcriptional landscape of the mammalian genome.</title>
        <authorList>
            <person name="Carninci P."/>
            <person name="Kasukawa T."/>
            <person name="Katayama S."/>
            <person name="Gough J."/>
            <person name="Frith M.C."/>
            <person name="Maeda N."/>
            <person name="Oyama R."/>
            <person name="Ravasi T."/>
            <person name="Lenhard B."/>
            <person name="Wells C."/>
            <person name="Kodzius R."/>
            <person name="Shimokawa K."/>
            <person name="Bajic V.B."/>
            <person name="Brenner S.E."/>
            <person name="Batalov S."/>
            <person name="Forrest A.R."/>
            <person name="Zavolan M."/>
            <person name="Davis M.J."/>
            <person name="Wilming L.G."/>
            <person name="Aidinis V."/>
            <person name="Allen J.E."/>
            <person name="Ambesi-Impiombato A."/>
            <person name="Apweiler R."/>
            <person name="Aturaliya R.N."/>
            <person name="Bailey T.L."/>
            <person name="Bansal M."/>
            <person name="Baxter L."/>
            <person name="Beisel K.W."/>
            <person name="Bersano T."/>
            <person name="Bono H."/>
            <person name="Chalk A.M."/>
            <person name="Chiu K.P."/>
            <person name="Choudhary V."/>
            <person name="Christoffels A."/>
            <person name="Clutterbuck D.R."/>
            <person name="Crowe M.L."/>
            <person name="Dalla E."/>
            <person name="Dalrymple B.P."/>
            <person name="de Bono B."/>
            <person name="Della Gatta G."/>
            <person name="di Bernardo D."/>
            <person name="Down T."/>
            <person name="Engstrom P."/>
            <person name="Fagiolini M."/>
            <person name="Faulkner G."/>
            <person name="Fletcher C.F."/>
            <person name="Fukushima T."/>
            <person name="Furuno M."/>
            <person name="Futaki S."/>
            <person name="Gariboldi M."/>
            <person name="Georgii-Hemming P."/>
            <person name="Gingeras T.R."/>
            <person name="Gojobori T."/>
            <person name="Green R.E."/>
            <person name="Gustincich S."/>
            <person name="Harbers M."/>
            <person name="Hayashi Y."/>
            <person name="Hensch T.K."/>
            <person name="Hirokawa N."/>
            <person name="Hill D."/>
            <person name="Huminiecki L."/>
            <person name="Iacono M."/>
            <person name="Ikeo K."/>
            <person name="Iwama A."/>
            <person name="Ishikawa T."/>
            <person name="Jakt M."/>
            <person name="Kanapin A."/>
            <person name="Katoh M."/>
            <person name="Kawasawa Y."/>
            <person name="Kelso J."/>
            <person name="Kitamura H."/>
            <person name="Kitano H."/>
            <person name="Kollias G."/>
            <person name="Krishnan S.P."/>
            <person name="Kruger A."/>
            <person name="Kummerfeld S.K."/>
            <person name="Kurochkin I.V."/>
            <person name="Lareau L.F."/>
            <person name="Lazarevic D."/>
            <person name="Lipovich L."/>
            <person name="Liu J."/>
            <person name="Liuni S."/>
            <person name="McWilliam S."/>
            <person name="Madan Babu M."/>
            <person name="Madera M."/>
            <person name="Marchionni L."/>
            <person name="Matsuda H."/>
            <person name="Matsuzawa S."/>
            <person name="Miki H."/>
            <person name="Mignone F."/>
            <person name="Miyake S."/>
            <person name="Morris K."/>
            <person name="Mottagui-Tabar S."/>
            <person name="Mulder N."/>
            <person name="Nakano N."/>
            <person name="Nakauchi H."/>
            <person name="Ng P."/>
            <person name="Nilsson R."/>
            <person name="Nishiguchi S."/>
            <person name="Nishikawa S."/>
            <person name="Nori F."/>
            <person name="Ohara O."/>
            <person name="Okazaki Y."/>
            <person name="Orlando V."/>
            <person name="Pang K.C."/>
            <person name="Pavan W.J."/>
            <person name="Pavesi G."/>
            <person name="Pesole G."/>
            <person name="Petrovsky N."/>
            <person name="Piazza S."/>
            <person name="Reed J."/>
            <person name="Reid J.F."/>
            <person name="Ring B.Z."/>
            <person name="Ringwald M."/>
            <person name="Rost B."/>
            <person name="Ruan Y."/>
            <person name="Salzberg S.L."/>
            <person name="Sandelin A."/>
            <person name="Schneider C."/>
            <person name="Schoenbach C."/>
            <person name="Sekiguchi K."/>
            <person name="Semple C.A."/>
            <person name="Seno S."/>
            <person name="Sessa L."/>
            <person name="Sheng Y."/>
            <person name="Shibata Y."/>
            <person name="Shimada H."/>
            <person name="Shimada K."/>
            <person name="Silva D."/>
            <person name="Sinclair B."/>
            <person name="Sperling S."/>
            <person name="Stupka E."/>
            <person name="Sugiura K."/>
            <person name="Sultana R."/>
            <person name="Takenaka Y."/>
            <person name="Taki K."/>
            <person name="Tammoja K."/>
            <person name="Tan S.L."/>
            <person name="Tang S."/>
            <person name="Taylor M.S."/>
            <person name="Tegner J."/>
            <person name="Teichmann S.A."/>
            <person name="Ueda H.R."/>
            <person name="van Nimwegen E."/>
            <person name="Verardo R."/>
            <person name="Wei C.L."/>
            <person name="Yagi K."/>
            <person name="Yamanishi H."/>
            <person name="Zabarovsky E."/>
            <person name="Zhu S."/>
            <person name="Zimmer A."/>
            <person name="Hide W."/>
            <person name="Bult C."/>
            <person name="Grimmond S.M."/>
            <person name="Teasdale R.D."/>
            <person name="Liu E.T."/>
            <person name="Brusic V."/>
            <person name="Quackenbush J."/>
            <person name="Wahlestedt C."/>
            <person name="Mattick J.S."/>
            <person name="Hume D.A."/>
            <person name="Kai C."/>
            <person name="Sasaki D."/>
            <person name="Tomaru Y."/>
            <person name="Fukuda S."/>
            <person name="Kanamori-Katayama M."/>
            <person name="Suzuki M."/>
            <person name="Aoki J."/>
            <person name="Arakawa T."/>
            <person name="Iida J."/>
            <person name="Imamura K."/>
            <person name="Itoh M."/>
            <person name="Kato T."/>
            <person name="Kawaji H."/>
            <person name="Kawagashira N."/>
            <person name="Kawashima T."/>
            <person name="Kojima M."/>
            <person name="Kondo S."/>
            <person name="Konno H."/>
            <person name="Nakano K."/>
            <person name="Ninomiya N."/>
            <person name="Nishio T."/>
            <person name="Okada M."/>
            <person name="Plessy C."/>
            <person name="Shibata K."/>
            <person name="Shiraki T."/>
            <person name="Suzuki S."/>
            <person name="Tagami M."/>
            <person name="Waki K."/>
            <person name="Watahiki A."/>
            <person name="Okamura-Oho Y."/>
            <person name="Suzuki H."/>
            <person name="Kawai J."/>
            <person name="Hayashizaki Y."/>
        </authorList>
    </citation>
    <scope>NUCLEOTIDE SEQUENCE [LARGE SCALE MRNA] (ISOFORM 1)</scope>
    <source>
        <strain>C57BL/6J</strain>
        <tissue>Testis</tissue>
    </source>
</reference>
<reference key="2">
    <citation type="journal article" date="2004" name="Genome Res.">
        <title>The status, quality, and expansion of the NIH full-length cDNA project: the Mammalian Gene Collection (MGC).</title>
        <authorList>
            <consortium name="The MGC Project Team"/>
        </authorList>
    </citation>
    <scope>NUCLEOTIDE SEQUENCE [LARGE SCALE MRNA] (ISOFORM 2)</scope>
    <source>
        <tissue>Testis</tissue>
    </source>
</reference>
<reference key="3">
    <citation type="journal article" date="2015" name="Andrology">
        <title>A novel acrosomal protein, IQCF1, involved in sperm capacitation and the acrosome reaction.</title>
        <authorList>
            <person name="Fang P."/>
            <person name="Xu W."/>
            <person name="Li D."/>
            <person name="Zhao X."/>
            <person name="Dai J."/>
            <person name="Wang Z."/>
            <person name="Yan X."/>
            <person name="Qin M."/>
            <person name="Zhang Y."/>
            <person name="Xu C."/>
            <person name="Wang L."/>
            <person name="Qiao Z."/>
        </authorList>
    </citation>
    <scope>TISSUE SPECIFICITY</scope>
    <scope>SUBCELLULAR LOCATION</scope>
    <scope>DISRUPTION PHENOTYPE</scope>
    <scope>FUNCTION</scope>
    <scope>INTERACTION WITH CALMODULIN</scope>
</reference>
<name>IQCF1_MOUSE</name>
<dbReference type="EMBL" id="AK006797">
    <property type="protein sequence ID" value="BAB24744.1"/>
    <property type="molecule type" value="mRNA"/>
</dbReference>
<dbReference type="EMBL" id="BC049769">
    <property type="protein sequence ID" value="AAH49769.1"/>
    <property type="molecule type" value="mRNA"/>
</dbReference>
<dbReference type="CCDS" id="CCDS52910.1">
    <molecule id="Q9D9K8-1"/>
</dbReference>
<dbReference type="CCDS" id="CCDS52911.1">
    <molecule id="Q9D9K8-2"/>
</dbReference>
<dbReference type="RefSeq" id="NP_001140173.1">
    <molecule id="Q9D9K8-2"/>
    <property type="nucleotide sequence ID" value="NM_001146701.1"/>
</dbReference>
<dbReference type="RefSeq" id="NP_083119.1">
    <molecule id="Q9D9K8-1"/>
    <property type="nucleotide sequence ID" value="NM_028843.1"/>
</dbReference>
<dbReference type="SMR" id="Q9D9K8"/>
<dbReference type="FunCoup" id="Q9D9K8">
    <property type="interactions" value="44"/>
</dbReference>
<dbReference type="STRING" id="10090.ENSMUSP00000082195"/>
<dbReference type="iPTMnet" id="Q9D9K8"/>
<dbReference type="PhosphoSitePlus" id="Q9D9K8"/>
<dbReference type="PaxDb" id="10090-ENSMUSP00000082195"/>
<dbReference type="ProteomicsDB" id="267003">
    <molecule id="Q9D9K8-1"/>
</dbReference>
<dbReference type="ProteomicsDB" id="267004">
    <molecule id="Q9D9K8-2"/>
</dbReference>
<dbReference type="Antibodypedia" id="31058">
    <property type="antibodies" value="114 antibodies from 19 providers"/>
</dbReference>
<dbReference type="Ensembl" id="ENSMUST00000085114.8">
    <molecule id="Q9D9K8-1"/>
    <property type="protein sequence ID" value="ENSMUSP00000082195.6"/>
    <property type="gene ID" value="ENSMUSG00000066383.8"/>
</dbReference>
<dbReference type="Ensembl" id="ENSMUST00000164965.3">
    <molecule id="Q9D9K8-2"/>
    <property type="protein sequence ID" value="ENSMUSP00000126039.2"/>
    <property type="gene ID" value="ENSMUSG00000066383.8"/>
</dbReference>
<dbReference type="GeneID" id="74267"/>
<dbReference type="KEGG" id="mmu:74267"/>
<dbReference type="UCSC" id="uc009rkc.2">
    <molecule id="Q9D9K8-1"/>
    <property type="organism name" value="mouse"/>
</dbReference>
<dbReference type="UCSC" id="uc009rkd.2">
    <molecule id="Q9D9K8-2"/>
    <property type="organism name" value="mouse"/>
</dbReference>
<dbReference type="AGR" id="MGI:1921517"/>
<dbReference type="CTD" id="132141"/>
<dbReference type="MGI" id="MGI:1921517">
    <property type="gene designation" value="Iqcf1"/>
</dbReference>
<dbReference type="VEuPathDB" id="HostDB:ENSMUSG00000066383"/>
<dbReference type="eggNOG" id="ENOG502SR3N">
    <property type="taxonomic scope" value="Eukaryota"/>
</dbReference>
<dbReference type="GeneTree" id="ENSGT00390000004641"/>
<dbReference type="HOGENOM" id="CLU_114989_0_0_1"/>
<dbReference type="InParanoid" id="Q9D9K8"/>
<dbReference type="OMA" id="TECIPFS"/>
<dbReference type="OrthoDB" id="9803391at2759"/>
<dbReference type="PhylomeDB" id="Q9D9K8"/>
<dbReference type="TreeFam" id="TF337908"/>
<dbReference type="BioGRID-ORCS" id="74267">
    <property type="hits" value="0 hits in 77 CRISPR screens"/>
</dbReference>
<dbReference type="PRO" id="PR:Q9D9K8"/>
<dbReference type="Proteomes" id="UP000000589">
    <property type="component" value="Chromosome 9"/>
</dbReference>
<dbReference type="RNAct" id="Q9D9K8">
    <property type="molecule type" value="protein"/>
</dbReference>
<dbReference type="Bgee" id="ENSMUSG00000066383">
    <property type="expression patterns" value="Expressed in seminiferous tubule of testis and 13 other cell types or tissues"/>
</dbReference>
<dbReference type="ExpressionAtlas" id="Q9D9K8">
    <property type="expression patterns" value="baseline and differential"/>
</dbReference>
<dbReference type="GO" id="GO:0001669">
    <property type="term" value="C:acrosomal vesicle"/>
    <property type="evidence" value="ECO:0000314"/>
    <property type="project" value="UniProtKB"/>
</dbReference>
<dbReference type="GO" id="GO:0005516">
    <property type="term" value="F:calmodulin binding"/>
    <property type="evidence" value="ECO:0000353"/>
    <property type="project" value="UniProtKB"/>
</dbReference>
<dbReference type="GO" id="GO:2000344">
    <property type="term" value="P:positive regulation of acrosome reaction"/>
    <property type="evidence" value="ECO:0000315"/>
    <property type="project" value="UniProtKB"/>
</dbReference>
<dbReference type="GO" id="GO:0060474">
    <property type="term" value="P:positive regulation of flagellated sperm motility involved in capacitation"/>
    <property type="evidence" value="ECO:0000315"/>
    <property type="project" value="UniProtKB"/>
</dbReference>
<dbReference type="CDD" id="cd23766">
    <property type="entry name" value="IQCG"/>
    <property type="match status" value="1"/>
</dbReference>
<dbReference type="FunFam" id="1.20.5.190:FF:000014">
    <property type="entry name" value="IQ motif containing F5"/>
    <property type="match status" value="1"/>
</dbReference>
<dbReference type="FunFam" id="1.20.5.190:FF:000015">
    <property type="entry name" value="IQ motif containing F5"/>
    <property type="match status" value="1"/>
</dbReference>
<dbReference type="Gene3D" id="1.20.5.190">
    <property type="match status" value="2"/>
</dbReference>
<dbReference type="InterPro" id="IPR000048">
    <property type="entry name" value="IQ_motif_EF-hand-BS"/>
</dbReference>
<dbReference type="InterPro" id="IPR039887">
    <property type="entry name" value="IQCF"/>
</dbReference>
<dbReference type="InterPro" id="IPR027417">
    <property type="entry name" value="P-loop_NTPase"/>
</dbReference>
<dbReference type="PANTHER" id="PTHR21633:SF14">
    <property type="entry name" value="IQ DOMAIN-CONTAINING PROTEIN F1"/>
    <property type="match status" value="1"/>
</dbReference>
<dbReference type="PANTHER" id="PTHR21633">
    <property type="entry name" value="IQ MOTIF CONTAINING F"/>
    <property type="match status" value="1"/>
</dbReference>
<dbReference type="Pfam" id="PF00612">
    <property type="entry name" value="IQ"/>
    <property type="match status" value="3"/>
</dbReference>
<dbReference type="SMART" id="SM00015">
    <property type="entry name" value="IQ"/>
    <property type="match status" value="3"/>
</dbReference>
<dbReference type="SUPFAM" id="SSF52540">
    <property type="entry name" value="P-loop containing nucleoside triphosphate hydrolases"/>
    <property type="match status" value="1"/>
</dbReference>
<dbReference type="PROSITE" id="PS50096">
    <property type="entry name" value="IQ"/>
    <property type="match status" value="2"/>
</dbReference>
<proteinExistence type="evidence at protein level"/>
<feature type="chain" id="PRO_0000282557" description="IQ domain-containing protein F1">
    <location>
        <begin position="1"/>
        <end position="182"/>
    </location>
</feature>
<feature type="domain" description="IQ 1" evidence="2">
    <location>
        <begin position="45"/>
        <end position="74"/>
    </location>
</feature>
<feature type="domain" description="IQ 2" evidence="2">
    <location>
        <begin position="101"/>
        <end position="130"/>
    </location>
</feature>
<feature type="region of interest" description="Disordered" evidence="3">
    <location>
        <begin position="1"/>
        <end position="43"/>
    </location>
</feature>
<feature type="compositionally biased region" description="Basic and acidic residues" evidence="3">
    <location>
        <begin position="1"/>
        <end position="10"/>
    </location>
</feature>
<feature type="compositionally biased region" description="Basic and acidic residues" evidence="3">
    <location>
        <begin position="31"/>
        <end position="43"/>
    </location>
</feature>
<feature type="splice variant" id="VSP_024186" description="In isoform 2." evidence="5">
    <original>MGEEQQKPEELNAPTDDAPQEKQQPADLSSETEKAK</original>
    <variation>M</variation>
    <location>
        <begin position="1"/>
        <end position="36"/>
    </location>
</feature>
<gene>
    <name evidence="6" type="primary">Iqcf1</name>
</gene>
<keyword id="KW-0025">Alternative splicing</keyword>
<keyword id="KW-0968">Cytoplasmic vesicle</keyword>
<keyword id="KW-1185">Reference proteome</keyword>
<keyword id="KW-0677">Repeat</keyword>